<organism>
    <name type="scientific">Crocosphaera subtropica (strain ATCC 51142 / BH68)</name>
    <name type="common">Cyanothece sp. (strain ATCC 51142)</name>
    <dbReference type="NCBI Taxonomy" id="43989"/>
    <lineage>
        <taxon>Bacteria</taxon>
        <taxon>Bacillati</taxon>
        <taxon>Cyanobacteriota</taxon>
        <taxon>Cyanophyceae</taxon>
        <taxon>Oscillatoriophycideae</taxon>
        <taxon>Chroococcales</taxon>
        <taxon>Aphanothecaceae</taxon>
        <taxon>Crocosphaera</taxon>
        <taxon>Crocosphaera subtropica</taxon>
    </lineage>
</organism>
<protein>
    <recommendedName>
        <fullName evidence="1">Ribosome maturation factor RimM</fullName>
    </recommendedName>
</protein>
<gene>
    <name evidence="1" type="primary">rimM</name>
    <name type="ordered locus">cce_1802</name>
</gene>
<reference key="1">
    <citation type="journal article" date="2008" name="Proc. Natl. Acad. Sci. U.S.A.">
        <title>The genome of Cyanothece 51142, a unicellular diazotrophic cyanobacterium important in the marine nitrogen cycle.</title>
        <authorList>
            <person name="Welsh E.A."/>
            <person name="Liberton M."/>
            <person name="Stoeckel J."/>
            <person name="Loh T."/>
            <person name="Elvitigala T."/>
            <person name="Wang C."/>
            <person name="Wollam A."/>
            <person name="Fulton R.S."/>
            <person name="Clifton S.W."/>
            <person name="Jacobs J.M."/>
            <person name="Aurora R."/>
            <person name="Ghosh B.K."/>
            <person name="Sherman L.A."/>
            <person name="Smith R.D."/>
            <person name="Wilson R.K."/>
            <person name="Pakrasi H.B."/>
        </authorList>
    </citation>
    <scope>NUCLEOTIDE SEQUENCE [LARGE SCALE GENOMIC DNA]</scope>
    <source>
        <strain>ATCC 51142 / BH68</strain>
    </source>
</reference>
<name>RIMM_CROS5</name>
<dbReference type="EMBL" id="CP000806">
    <property type="protein sequence ID" value="ACB51152.1"/>
    <property type="molecule type" value="Genomic_DNA"/>
</dbReference>
<dbReference type="RefSeq" id="WP_009545616.1">
    <property type="nucleotide sequence ID" value="NC_010546.1"/>
</dbReference>
<dbReference type="SMR" id="B1WZK0"/>
<dbReference type="STRING" id="43989.cce_1802"/>
<dbReference type="KEGG" id="cyt:cce_1802"/>
<dbReference type="eggNOG" id="COG0806">
    <property type="taxonomic scope" value="Bacteria"/>
</dbReference>
<dbReference type="HOGENOM" id="CLU_077636_3_0_3"/>
<dbReference type="OrthoDB" id="9810331at2"/>
<dbReference type="Proteomes" id="UP000001203">
    <property type="component" value="Chromosome circular"/>
</dbReference>
<dbReference type="GO" id="GO:0005737">
    <property type="term" value="C:cytoplasm"/>
    <property type="evidence" value="ECO:0007669"/>
    <property type="project" value="UniProtKB-SubCell"/>
</dbReference>
<dbReference type="GO" id="GO:0005840">
    <property type="term" value="C:ribosome"/>
    <property type="evidence" value="ECO:0007669"/>
    <property type="project" value="InterPro"/>
</dbReference>
<dbReference type="GO" id="GO:0043022">
    <property type="term" value="F:ribosome binding"/>
    <property type="evidence" value="ECO:0007669"/>
    <property type="project" value="InterPro"/>
</dbReference>
<dbReference type="GO" id="GO:0042274">
    <property type="term" value="P:ribosomal small subunit biogenesis"/>
    <property type="evidence" value="ECO:0007669"/>
    <property type="project" value="UniProtKB-UniRule"/>
</dbReference>
<dbReference type="GO" id="GO:0006364">
    <property type="term" value="P:rRNA processing"/>
    <property type="evidence" value="ECO:0007669"/>
    <property type="project" value="UniProtKB-UniRule"/>
</dbReference>
<dbReference type="Gene3D" id="2.30.30.240">
    <property type="entry name" value="PRC-barrel domain"/>
    <property type="match status" value="1"/>
</dbReference>
<dbReference type="Gene3D" id="2.40.30.60">
    <property type="entry name" value="RimM"/>
    <property type="match status" value="1"/>
</dbReference>
<dbReference type="HAMAP" id="MF_00014">
    <property type="entry name" value="Ribosome_mat_RimM"/>
    <property type="match status" value="1"/>
</dbReference>
<dbReference type="InterPro" id="IPR027275">
    <property type="entry name" value="PRC-brl_dom"/>
</dbReference>
<dbReference type="InterPro" id="IPR011033">
    <property type="entry name" value="PRC_barrel-like_sf"/>
</dbReference>
<dbReference type="InterPro" id="IPR011961">
    <property type="entry name" value="RimM"/>
</dbReference>
<dbReference type="InterPro" id="IPR002676">
    <property type="entry name" value="RimM_N"/>
</dbReference>
<dbReference type="InterPro" id="IPR036976">
    <property type="entry name" value="RimM_N_sf"/>
</dbReference>
<dbReference type="InterPro" id="IPR009000">
    <property type="entry name" value="Transl_B-barrel_sf"/>
</dbReference>
<dbReference type="NCBIfam" id="TIGR02273">
    <property type="entry name" value="16S_RimM"/>
    <property type="match status" value="1"/>
</dbReference>
<dbReference type="PANTHER" id="PTHR33692">
    <property type="entry name" value="RIBOSOME MATURATION FACTOR RIMM"/>
    <property type="match status" value="1"/>
</dbReference>
<dbReference type="PANTHER" id="PTHR33692:SF1">
    <property type="entry name" value="RIBOSOME MATURATION FACTOR RIMM"/>
    <property type="match status" value="1"/>
</dbReference>
<dbReference type="Pfam" id="PF05239">
    <property type="entry name" value="PRC"/>
    <property type="match status" value="1"/>
</dbReference>
<dbReference type="Pfam" id="PF01782">
    <property type="entry name" value="RimM"/>
    <property type="match status" value="1"/>
</dbReference>
<dbReference type="SUPFAM" id="SSF50346">
    <property type="entry name" value="PRC-barrel domain"/>
    <property type="match status" value="1"/>
</dbReference>
<dbReference type="SUPFAM" id="SSF50447">
    <property type="entry name" value="Translation proteins"/>
    <property type="match status" value="1"/>
</dbReference>
<accession>B1WZK0</accession>
<proteinExistence type="inferred from homology"/>
<comment type="function">
    <text evidence="1">An accessory protein needed during the final step in the assembly of 30S ribosomal subunit, possibly for assembly of the head region. Essential for efficient processing of 16S rRNA. May be needed both before and after RbfA during the maturation of 16S rRNA. It has affinity for free ribosomal 30S subunits but not for 70S ribosomes.</text>
</comment>
<comment type="subunit">
    <text evidence="1">Binds ribosomal protein uS19.</text>
</comment>
<comment type="subcellular location">
    <subcellularLocation>
        <location evidence="1">Cytoplasm</location>
    </subcellularLocation>
</comment>
<comment type="domain">
    <text evidence="1">The PRC barrel domain binds ribosomal protein uS19.</text>
</comment>
<comment type="similarity">
    <text evidence="1">Belongs to the RimM family.</text>
</comment>
<keyword id="KW-0143">Chaperone</keyword>
<keyword id="KW-0963">Cytoplasm</keyword>
<keyword id="KW-1185">Reference proteome</keyword>
<keyword id="KW-0690">Ribosome biogenesis</keyword>
<keyword id="KW-0698">rRNA processing</keyword>
<sequence>MENNKNQWLEIGTIVSARGLKGELKVLSSTDFPERFEIPGKRWLQPPHDPYPQAIELISGKSVAGKNIYIVRLEGIENRNQAETLRGYKLLIMDQELPELEEEEYHVSQLINVQVYHHKTGELLGTVIDLFTTGHDLLEIQLINNSEREAKKTKERKVLIPFVYEIVPVVDLENNRIEINPPKGLLSLGDS</sequence>
<evidence type="ECO:0000255" key="1">
    <source>
        <dbReference type="HAMAP-Rule" id="MF_00014"/>
    </source>
</evidence>
<feature type="chain" id="PRO_0000351753" description="Ribosome maturation factor RimM">
    <location>
        <begin position="1"/>
        <end position="191"/>
    </location>
</feature>
<feature type="domain" description="PRC barrel" evidence="1">
    <location>
        <begin position="102"/>
        <end position="185"/>
    </location>
</feature>